<protein>
    <recommendedName>
        <fullName evidence="4">Glutamate [NMDA] receptor subunit 1</fullName>
    </recommendedName>
</protein>
<keyword id="KW-0106">Calcium</keyword>
<keyword id="KW-1003">Cell membrane</keyword>
<keyword id="KW-1015">Disulfide bond</keyword>
<keyword id="KW-0325">Glycoprotein</keyword>
<keyword id="KW-0407">Ion channel</keyword>
<keyword id="KW-0406">Ion transport</keyword>
<keyword id="KW-1071">Ligand-gated ion channel</keyword>
<keyword id="KW-0460">Magnesium</keyword>
<keyword id="KW-0472">Membrane</keyword>
<keyword id="KW-0597">Phosphoprotein</keyword>
<keyword id="KW-0628">Postsynaptic cell membrane</keyword>
<keyword id="KW-0675">Receptor</keyword>
<keyword id="KW-0732">Signal</keyword>
<keyword id="KW-0770">Synapse</keyword>
<keyword id="KW-0812">Transmembrane</keyword>
<keyword id="KW-1133">Transmembrane helix</keyword>
<keyword id="KW-0813">Transport</keyword>
<gene>
    <name evidence="4" type="primary">Nmdar1</name>
    <name type="ORF">GE25274</name>
</gene>
<sequence>MAVAGFVFCWPLLGLTIVLLVAPIDAAQRHTASDNPSTYNIGGVLSNSDSEEHFSTTIKHLNFDQQYVPRKVTYYDKTIRMDKNPIKTVFNVCDKLIENRVYAVVVSHEQTSGDLSPAAVSYTSGFYSIPVIGISSRDAAFSDKNIHVSFLRTVPPYYHQADVWLEMLSHFAYTKVIIIHSSDTDGRAILGRFQTTSQTYYDDVDVRATVELIVEFEPKLESFTEHLIDMKTAQSRVYLMYASTEDAQVIFRDAGEYNMTGEGHVWIVTEQALFSNNTPDGVLGLQLEHAHSDKGHIRDSVYVLASAIKEMISNETIAEAPKDCGDSAVNWESGKRLFQYLKSRNITGETGQVAFDDNGDRIYAGYDVINIREQQKKHVVGKFSYDSMRAKMRMRINDSEIIWPGKQRRKPEGIMIPTHLKLLTIEEKPFVYVRRMGDDEFRCEPDERPCPLFNNSDATANEFCCRGYCIDLLIELSKRINFTYDLALSPDGQFGHYILRNSTGAMTLRKEWTGLIGELVNERADMIVAPLTINPERAEYIEFSKPFKYQGITILEKKPSRSSTLVSFLQPFSNTLWILVMVSVHVVALVLYLLDRFSPFGRFKLSHSDSNEEKALNLSSAVWFAWGVLLNSGIGEGTPRSFSARVLGMVWAGFAMIIVASYTANLAAFLVLERPKTKLSGINDARLRNTMENLTCATVKGSSVDMYFRRQVELSNMYRTMEANNYATAEQAIQDVKKGKLMAFIWDSSRLEYEASKDCELVTAGELFGRSGYGIGLQKGSPWTDAVTLAILEFHESGFMEKLDKQWIFHGHVQQNCELFEKTPNTLGLKNMAGVFILVGVGIAGGVGLIIIEVIYKKHQVKKQKRLDIARHAADKWRGTIEKRKTIRASLAMQRQYNVGLNSTHAPGTISLAVDKRRYPRLGQRLGPERAWPGDAADVLRIRRPYELGKPGQSPKVIATNQPGMPMPMLGKTRPQQSVLPPRYSPGYTSDVSHLVV</sequence>
<dbReference type="EMBL" id="CM000160">
    <property type="protein sequence ID" value="EDW95779.1"/>
    <property type="molecule type" value="Genomic_DNA"/>
</dbReference>
<dbReference type="RefSeq" id="XP_002096067.1">
    <property type="nucleotide sequence ID" value="XM_002096031.2"/>
</dbReference>
<dbReference type="SMR" id="B4PVB0"/>
<dbReference type="GlyCosmos" id="B4PVB0">
    <property type="glycosylation" value="8 sites, No reported glycans"/>
</dbReference>
<dbReference type="EnsemblMetazoa" id="FBtr0271792">
    <property type="protein sequence ID" value="FBpp0270284"/>
    <property type="gene ID" value="FBgn0242356"/>
</dbReference>
<dbReference type="EnsemblMetazoa" id="FBtr0399570">
    <property type="protein sequence ID" value="FBpp0358592"/>
    <property type="gene ID" value="FBgn0242356"/>
</dbReference>
<dbReference type="EnsemblMetazoa" id="FBtr0406016">
    <property type="protein sequence ID" value="FBpp0364617"/>
    <property type="gene ID" value="FBgn0242356"/>
</dbReference>
<dbReference type="EnsemblMetazoa" id="XM_015191659.3">
    <property type="protein sequence ID" value="XP_015047145.1"/>
    <property type="gene ID" value="LOC6535418"/>
</dbReference>
<dbReference type="EnsemblMetazoa" id="XM_015191660.3">
    <property type="protein sequence ID" value="XP_015047146.1"/>
    <property type="gene ID" value="LOC6535418"/>
</dbReference>
<dbReference type="GeneID" id="6535418"/>
<dbReference type="KEGG" id="dya:Dyak_GE25274"/>
<dbReference type="CTD" id="40665"/>
<dbReference type="eggNOG" id="KOG4440">
    <property type="taxonomic scope" value="Eukaryota"/>
</dbReference>
<dbReference type="HOGENOM" id="CLU_007257_2_0_1"/>
<dbReference type="OMA" id="FANNTPD"/>
<dbReference type="OrthoDB" id="5984008at2759"/>
<dbReference type="PhylomeDB" id="B4PVB0"/>
<dbReference type="Proteomes" id="UP000002282">
    <property type="component" value="Chromosome 3R"/>
</dbReference>
<dbReference type="GO" id="GO:0017146">
    <property type="term" value="C:NMDA selective glutamate receptor complex"/>
    <property type="evidence" value="ECO:0000250"/>
    <property type="project" value="UniProtKB"/>
</dbReference>
<dbReference type="GO" id="GO:0014069">
    <property type="term" value="C:postsynaptic density"/>
    <property type="evidence" value="ECO:0007669"/>
    <property type="project" value="UniProtKB-SubCell"/>
</dbReference>
<dbReference type="GO" id="GO:0045211">
    <property type="term" value="C:postsynaptic membrane"/>
    <property type="evidence" value="ECO:0000250"/>
    <property type="project" value="UniProtKB"/>
</dbReference>
<dbReference type="GO" id="GO:0004970">
    <property type="term" value="F:glutamate-gated receptor activity"/>
    <property type="evidence" value="ECO:0000250"/>
    <property type="project" value="UniProtKB"/>
</dbReference>
<dbReference type="GO" id="GO:0004972">
    <property type="term" value="F:NMDA glutamate receptor activity"/>
    <property type="evidence" value="ECO:0007669"/>
    <property type="project" value="EnsemblMetazoa"/>
</dbReference>
<dbReference type="GO" id="GO:0048149">
    <property type="term" value="P:behavioral response to ethanol"/>
    <property type="evidence" value="ECO:0007669"/>
    <property type="project" value="EnsemblMetazoa"/>
</dbReference>
<dbReference type="GO" id="GO:0055074">
    <property type="term" value="P:calcium ion homeostasis"/>
    <property type="evidence" value="ECO:0000250"/>
    <property type="project" value="UniProtKB"/>
</dbReference>
<dbReference type="GO" id="GO:0007268">
    <property type="term" value="P:chemical synaptic transmission"/>
    <property type="evidence" value="ECO:0000250"/>
    <property type="project" value="UniProtKB"/>
</dbReference>
<dbReference type="GO" id="GO:0035235">
    <property type="term" value="P:ionotropic glutamate receptor signaling pathway"/>
    <property type="evidence" value="ECO:0000250"/>
    <property type="project" value="UniProtKB"/>
</dbReference>
<dbReference type="GO" id="GO:0007616">
    <property type="term" value="P:long-term memory"/>
    <property type="evidence" value="ECO:0000250"/>
    <property type="project" value="UniProtKB"/>
</dbReference>
<dbReference type="GO" id="GO:0072375">
    <property type="term" value="P:medium-term memory"/>
    <property type="evidence" value="ECO:0007669"/>
    <property type="project" value="EnsemblMetazoa"/>
</dbReference>
<dbReference type="GO" id="GO:0008355">
    <property type="term" value="P:olfactory learning"/>
    <property type="evidence" value="ECO:0000250"/>
    <property type="project" value="UniProtKB"/>
</dbReference>
<dbReference type="GO" id="GO:0042331">
    <property type="term" value="P:phototaxis"/>
    <property type="evidence" value="ECO:0007669"/>
    <property type="project" value="EnsemblMetazoa"/>
</dbReference>
<dbReference type="GO" id="GO:0042391">
    <property type="term" value="P:regulation of membrane potential"/>
    <property type="evidence" value="ECO:0000250"/>
    <property type="project" value="UniProtKB"/>
</dbReference>
<dbReference type="GO" id="GO:0050975">
    <property type="term" value="P:sensory perception of touch"/>
    <property type="evidence" value="ECO:0007669"/>
    <property type="project" value="EnsemblMetazoa"/>
</dbReference>
<dbReference type="CDD" id="cd06379">
    <property type="entry name" value="PBP1_iGluR_NMDA_NR1"/>
    <property type="match status" value="1"/>
</dbReference>
<dbReference type="CDD" id="cd13719">
    <property type="entry name" value="PBP2_iGluR_NMDA_Nr1"/>
    <property type="match status" value="1"/>
</dbReference>
<dbReference type="FunFam" id="3.40.190.10:FF:000177">
    <property type="entry name" value="Glutamate [NMDA] receptor subunit 1"/>
    <property type="match status" value="1"/>
</dbReference>
<dbReference type="FunFam" id="3.40.50.2300:FF:000266">
    <property type="entry name" value="Glutamate [NMDA] receptor subunit 1"/>
    <property type="match status" value="1"/>
</dbReference>
<dbReference type="FunFam" id="3.40.190.10:FF:000010">
    <property type="entry name" value="glutamate receptor ionotropic, NMDA 1 isoform X1"/>
    <property type="match status" value="1"/>
</dbReference>
<dbReference type="FunFam" id="3.40.50.2300:FF:000025">
    <property type="entry name" value="glutamate receptor ionotropic, NMDA 1 isoform X1"/>
    <property type="match status" value="1"/>
</dbReference>
<dbReference type="Gene3D" id="1.10.287.70">
    <property type="match status" value="1"/>
</dbReference>
<dbReference type="Gene3D" id="3.40.50.2300">
    <property type="match status" value="2"/>
</dbReference>
<dbReference type="Gene3D" id="3.40.190.10">
    <property type="entry name" value="Periplasmic binding protein-like II"/>
    <property type="match status" value="2"/>
</dbReference>
<dbReference type="InterPro" id="IPR001828">
    <property type="entry name" value="ANF_lig-bd_rcpt"/>
</dbReference>
<dbReference type="InterPro" id="IPR018882">
    <property type="entry name" value="CaM-bd_C0_NMDA_rcpt_NR1"/>
</dbReference>
<dbReference type="InterPro" id="IPR019594">
    <property type="entry name" value="Glu/Gly-bd"/>
</dbReference>
<dbReference type="InterPro" id="IPR001508">
    <property type="entry name" value="Iono_Glu_rcpt_met"/>
</dbReference>
<dbReference type="InterPro" id="IPR015683">
    <property type="entry name" value="Ionotropic_Glu_rcpt"/>
</dbReference>
<dbReference type="InterPro" id="IPR001320">
    <property type="entry name" value="Iontro_rcpt_C"/>
</dbReference>
<dbReference type="InterPro" id="IPR049872">
    <property type="entry name" value="NMDA1-like_ligand-bd"/>
</dbReference>
<dbReference type="InterPro" id="IPR049873">
    <property type="entry name" value="NMDA1-like_N"/>
</dbReference>
<dbReference type="InterPro" id="IPR028082">
    <property type="entry name" value="Peripla_BP_I"/>
</dbReference>
<dbReference type="PANTHER" id="PTHR18966">
    <property type="entry name" value="IONOTROPIC GLUTAMATE RECEPTOR"/>
    <property type="match status" value="1"/>
</dbReference>
<dbReference type="Pfam" id="PF01094">
    <property type="entry name" value="ANF_receptor"/>
    <property type="match status" value="1"/>
</dbReference>
<dbReference type="Pfam" id="PF10562">
    <property type="entry name" value="CaM_bdg_C0"/>
    <property type="match status" value="1"/>
</dbReference>
<dbReference type="Pfam" id="PF00060">
    <property type="entry name" value="Lig_chan"/>
    <property type="match status" value="1"/>
</dbReference>
<dbReference type="Pfam" id="PF10613">
    <property type="entry name" value="Lig_chan-Glu_bd"/>
    <property type="match status" value="1"/>
</dbReference>
<dbReference type="PRINTS" id="PR00177">
    <property type="entry name" value="NMDARECEPTOR"/>
</dbReference>
<dbReference type="SMART" id="SM00918">
    <property type="entry name" value="Lig_chan-Glu_bd"/>
    <property type="match status" value="1"/>
</dbReference>
<dbReference type="SMART" id="SM00079">
    <property type="entry name" value="PBPe"/>
    <property type="match status" value="1"/>
</dbReference>
<dbReference type="SUPFAM" id="SSF53822">
    <property type="entry name" value="Periplasmic binding protein-like I"/>
    <property type="match status" value="1"/>
</dbReference>
<dbReference type="SUPFAM" id="SSF53850">
    <property type="entry name" value="Periplasmic binding protein-like II"/>
    <property type="match status" value="1"/>
</dbReference>
<dbReference type="SUPFAM" id="SSF81324">
    <property type="entry name" value="Voltage-gated potassium channels"/>
    <property type="match status" value="1"/>
</dbReference>
<organism>
    <name type="scientific">Drosophila yakuba</name>
    <name type="common">Fruit fly</name>
    <dbReference type="NCBI Taxonomy" id="7245"/>
    <lineage>
        <taxon>Eukaryota</taxon>
        <taxon>Metazoa</taxon>
        <taxon>Ecdysozoa</taxon>
        <taxon>Arthropoda</taxon>
        <taxon>Hexapoda</taxon>
        <taxon>Insecta</taxon>
        <taxon>Pterygota</taxon>
        <taxon>Neoptera</taxon>
        <taxon>Endopterygota</taxon>
        <taxon>Diptera</taxon>
        <taxon>Brachycera</taxon>
        <taxon>Muscomorpha</taxon>
        <taxon>Ephydroidea</taxon>
        <taxon>Drosophilidae</taxon>
        <taxon>Drosophila</taxon>
        <taxon>Sophophora</taxon>
    </lineage>
</organism>
<feature type="signal peptide" evidence="5">
    <location>
        <begin position="1"/>
        <end position="26"/>
    </location>
</feature>
<feature type="chain" id="PRO_0000364004" description="Glutamate [NMDA] receptor subunit 1" evidence="5">
    <location>
        <begin position="27"/>
        <end position="997"/>
    </location>
</feature>
<feature type="topological domain" description="Extracellular" evidence="5">
    <location>
        <begin position="27"/>
        <end position="573"/>
    </location>
</feature>
<feature type="transmembrane region" description="Helical" evidence="5">
    <location>
        <begin position="574"/>
        <end position="594"/>
    </location>
</feature>
<feature type="topological domain" description="Cytoplasmic" evidence="5">
    <location>
        <begin position="595"/>
        <end position="651"/>
    </location>
</feature>
<feature type="transmembrane region" description="Helical" evidence="5">
    <location>
        <begin position="652"/>
        <end position="672"/>
    </location>
</feature>
<feature type="topological domain" description="Extracellular" evidence="5">
    <location>
        <begin position="673"/>
        <end position="831"/>
    </location>
</feature>
<feature type="transmembrane region" description="Helical" evidence="5">
    <location>
        <begin position="832"/>
        <end position="852"/>
    </location>
</feature>
<feature type="topological domain" description="Cytoplasmic" evidence="5">
    <location>
        <begin position="853"/>
        <end position="997"/>
    </location>
</feature>
<feature type="region of interest" description="Disordered" evidence="6">
    <location>
        <begin position="970"/>
        <end position="997"/>
    </location>
</feature>
<feature type="compositionally biased region" description="Polar residues" evidence="6">
    <location>
        <begin position="987"/>
        <end position="997"/>
    </location>
</feature>
<feature type="binding site" evidence="2">
    <location>
        <begin position="530"/>
        <end position="532"/>
    </location>
    <ligand>
        <name>glycine</name>
        <dbReference type="ChEBI" id="CHEBI:57305"/>
    </ligand>
</feature>
<feature type="binding site" evidence="2">
    <location>
        <position position="537"/>
    </location>
    <ligand>
        <name>glycine</name>
        <dbReference type="ChEBI" id="CHEBI:57305"/>
    </ligand>
</feature>
<feature type="binding site" evidence="2">
    <location>
        <position position="703"/>
    </location>
    <ligand>
        <name>glycine</name>
        <dbReference type="ChEBI" id="CHEBI:57305"/>
    </ligand>
</feature>
<feature type="binding site" evidence="2">
    <location>
        <position position="747"/>
    </location>
    <ligand>
        <name>glycine</name>
        <dbReference type="ChEBI" id="CHEBI:57305"/>
    </ligand>
</feature>
<feature type="glycosylation site" description="N-linked (GlcNAc...) asparagine" evidence="5">
    <location>
        <position position="258"/>
    </location>
</feature>
<feature type="glycosylation site" description="N-linked (GlcNAc...) asparagine" evidence="5">
    <location>
        <position position="314"/>
    </location>
</feature>
<feature type="glycosylation site" description="N-linked (GlcNAc...) asparagine" evidence="5">
    <location>
        <position position="345"/>
    </location>
</feature>
<feature type="glycosylation site" description="N-linked (GlcNAc...) asparagine" evidence="5">
    <location>
        <position position="397"/>
    </location>
</feature>
<feature type="glycosylation site" description="N-linked (GlcNAc...) asparagine" evidence="5">
    <location>
        <position position="454"/>
    </location>
</feature>
<feature type="glycosylation site" description="N-linked (GlcNAc...) asparagine" evidence="5">
    <location>
        <position position="481"/>
    </location>
</feature>
<feature type="glycosylation site" description="N-linked (GlcNAc...) asparagine" evidence="5">
    <location>
        <position position="501"/>
    </location>
</feature>
<feature type="glycosylation site" description="N-linked (GlcNAc...) asparagine" evidence="5">
    <location>
        <position position="693"/>
    </location>
</feature>
<feature type="disulfide bond" description="Interchain" evidence="3">
    <location>
        <position position="93"/>
    </location>
</feature>
<proteinExistence type="inferred from homology"/>
<evidence type="ECO:0000250" key="1"/>
<evidence type="ECO:0000250" key="2">
    <source>
        <dbReference type="UniProtKB" id="P35439"/>
    </source>
</evidence>
<evidence type="ECO:0000250" key="3">
    <source>
        <dbReference type="UniProtKB" id="Q05586"/>
    </source>
</evidence>
<evidence type="ECO:0000250" key="4">
    <source>
        <dbReference type="UniProtKB" id="Q24418"/>
    </source>
</evidence>
<evidence type="ECO:0000255" key="5"/>
<evidence type="ECO:0000256" key="6">
    <source>
        <dbReference type="SAM" id="MobiDB-lite"/>
    </source>
</evidence>
<evidence type="ECO:0000305" key="7"/>
<evidence type="ECO:0000312" key="8">
    <source>
        <dbReference type="EMBL" id="EDW95779.1"/>
    </source>
</evidence>
<accession>B4PVB0</accession>
<reference evidence="8" key="1">
    <citation type="journal article" date="2007" name="Nature">
        <title>Evolution of genes and genomes on the Drosophila phylogeny.</title>
        <authorList>
            <consortium name="Drosophila 12 genomes consortium"/>
        </authorList>
    </citation>
    <scope>NUCLEOTIDE SEQUENCE [LARGE SCALE GENOMIC DNA]</scope>
    <source>
        <strain evidence="8">Tai18E2 / Tucson 14021-0261.01</strain>
    </source>
</reference>
<name>NMDA1_DROYA</name>
<comment type="function">
    <text evidence="2 4">NMDA receptor subtype of glutamate-gated ion channels with high calcium permeability and voltage-dependent sensitivity to magnesium. Mediated by glycine. This protein plays a key role in synaptic plasticity, synaptogenesis, excitotoxicity, memory acquisition and learning. It mediates neuronal functions in glutamate neurotransmission. Is involved in the cell surface targeting of NMDA receptors. Plays a role in associative learning and in long-term memory consolidation (By similarity).</text>
</comment>
<comment type="subunit">
    <text evidence="1">Forms a heteromeric NMDA channel with Nmdar2.</text>
</comment>
<comment type="subcellular location">
    <subcellularLocation>
        <location evidence="4">Cell membrane</location>
        <topology evidence="4">Multi-pass membrane protein</topology>
    </subcellularLocation>
    <subcellularLocation>
        <location evidence="4">Postsynaptic cell membrane</location>
    </subcellularLocation>
    <subcellularLocation>
        <location evidence="4">Postsynaptic density</location>
    </subcellularLocation>
</comment>
<comment type="similarity">
    <text evidence="7">Belongs to the glutamate-gated ion channel (TC 1.A.10.1) family.</text>
</comment>